<feature type="chain" id="PRO_0000122401" description="Prolyl endopeptidase">
    <location>
        <begin position="1"/>
        <end position="710"/>
    </location>
</feature>
<feature type="active site" description="Charge relay system" evidence="1">
    <location>
        <position position="554"/>
    </location>
</feature>
<feature type="active site" description="Charge relay system" evidence="1">
    <location>
        <position position="641"/>
    </location>
</feature>
<feature type="active site" description="Charge relay system" evidence="1">
    <location>
        <position position="680"/>
    </location>
</feature>
<feature type="modified residue" description="N-acetylmethionine" evidence="7">
    <location>
        <position position="1"/>
    </location>
</feature>
<feature type="modified residue" description="N6-acetyllysine" evidence="6">
    <location>
        <position position="157"/>
    </location>
</feature>
<feature type="sequence variant" id="VAR_047790" description="In dbSNP:rs12192054.">
    <original>L</original>
    <variation>V</variation>
    <location>
        <position position="351"/>
    </location>
</feature>
<feature type="sequence variant" id="VAR_047791" description="In dbSNP:rs1051484." evidence="4">
    <original>V</original>
    <variation>I</variation>
    <location>
        <position position="706"/>
    </location>
</feature>
<feature type="sequence conflict" description="In Ref. 1; CAA52605 and 2; BAA04661." evidence="5" ref="1 2">
    <original>L</original>
    <variation>F</variation>
    <location>
        <position position="4"/>
    </location>
</feature>
<feature type="sequence conflict" description="In Ref. 2; BAA04661." evidence="5" ref="2">
    <original>V</original>
    <variation>I</variation>
    <location>
        <position position="16"/>
    </location>
</feature>
<feature type="sequence conflict" description="In Ref. 2; BAA04661." evidence="5" ref="2">
    <original>R</original>
    <variation>C</variation>
    <location>
        <position position="245"/>
    </location>
</feature>
<feature type="sequence conflict" description="In Ref. 2; BAA04661." evidence="5" ref="2">
    <original>T</original>
    <variation>A</variation>
    <location>
        <position position="298"/>
    </location>
</feature>
<feature type="sequence conflict" description="In Ref. 1; CAA52605." evidence="5" ref="1">
    <original>R</original>
    <variation>W</variation>
    <location>
        <position position="319"/>
    </location>
</feature>
<feature type="sequence conflict" description="In Ref. 2; BAA04661." evidence="5" ref="2">
    <original>I</original>
    <variation>L</variation>
    <location>
        <position position="440"/>
    </location>
</feature>
<feature type="sequence conflict" description="In Ref. 2; BAA04661." evidence="5" ref="2">
    <original>G</original>
    <variation>S</variation>
    <location>
        <position position="459"/>
    </location>
</feature>
<feature type="strand" evidence="8">
    <location>
        <begin position="16"/>
        <end position="19"/>
    </location>
</feature>
<feature type="strand" evidence="8">
    <location>
        <begin position="22"/>
        <end position="25"/>
    </location>
</feature>
<feature type="helix" evidence="8">
    <location>
        <begin position="29"/>
        <end position="32"/>
    </location>
</feature>
<feature type="helix" evidence="8">
    <location>
        <begin position="37"/>
        <end position="55"/>
    </location>
</feature>
<feature type="helix" evidence="8">
    <location>
        <begin position="59"/>
        <end position="70"/>
    </location>
</feature>
<feature type="strand" evidence="8">
    <location>
        <begin position="80"/>
        <end position="82"/>
    </location>
</feature>
<feature type="strand" evidence="8">
    <location>
        <begin position="85"/>
        <end position="91"/>
    </location>
</feature>
<feature type="strand" evidence="8">
    <location>
        <begin position="99"/>
        <end position="105"/>
    </location>
</feature>
<feature type="strand" evidence="8">
    <location>
        <begin position="111"/>
        <end position="114"/>
    </location>
</feature>
<feature type="helix" evidence="8">
    <location>
        <begin position="116"/>
        <end position="119"/>
    </location>
</feature>
<feature type="strand" evidence="8">
    <location>
        <begin position="121"/>
        <end position="123"/>
    </location>
</feature>
<feature type="strand" evidence="8">
    <location>
        <begin position="125"/>
        <end position="132"/>
    </location>
</feature>
<feature type="strand" evidence="8">
    <location>
        <begin position="136"/>
        <end position="145"/>
    </location>
</feature>
<feature type="strand" evidence="8">
    <location>
        <begin position="151"/>
        <end position="157"/>
    </location>
</feature>
<feature type="turn" evidence="8">
    <location>
        <begin position="158"/>
        <end position="161"/>
    </location>
</feature>
<feature type="strand" evidence="8">
    <location>
        <begin position="162"/>
        <end position="171"/>
    </location>
</feature>
<feature type="strand" evidence="8">
    <location>
        <begin position="176"/>
        <end position="178"/>
    </location>
</feature>
<feature type="strand" evidence="8">
    <location>
        <begin position="182"/>
        <end position="189"/>
    </location>
</feature>
<feature type="strand" evidence="8">
    <location>
        <begin position="198"/>
        <end position="200"/>
    </location>
</feature>
<feature type="strand" evidence="8">
    <location>
        <begin position="209"/>
        <end position="214"/>
    </location>
</feature>
<feature type="helix" evidence="8">
    <location>
        <begin position="219"/>
        <end position="221"/>
    </location>
</feature>
<feature type="strand" evidence="8">
    <location>
        <begin position="223"/>
        <end position="226"/>
    </location>
</feature>
<feature type="strand" evidence="8">
    <location>
        <begin position="235"/>
        <end position="240"/>
    </location>
</feature>
<feature type="strand" evidence="8">
    <location>
        <begin position="246"/>
        <end position="257"/>
    </location>
</feature>
<feature type="strand" evidence="8">
    <location>
        <begin position="260"/>
        <end position="265"/>
    </location>
</feature>
<feature type="helix" evidence="8">
    <location>
        <begin position="266"/>
        <end position="268"/>
    </location>
</feature>
<feature type="strand" evidence="8">
    <location>
        <begin position="270"/>
        <end position="273"/>
    </location>
</feature>
<feature type="strand" evidence="8">
    <location>
        <begin position="280"/>
        <end position="283"/>
    </location>
</feature>
<feature type="strand" evidence="8">
    <location>
        <begin position="285"/>
        <end position="288"/>
    </location>
</feature>
<feature type="strand" evidence="8">
    <location>
        <begin position="290"/>
        <end position="296"/>
    </location>
</feature>
<feature type="strand" evidence="8">
    <location>
        <begin position="299"/>
        <end position="304"/>
    </location>
</feature>
<feature type="strand" evidence="8">
    <location>
        <begin position="312"/>
        <end position="317"/>
    </location>
</feature>
<feature type="helix" evidence="8">
    <location>
        <begin position="323"/>
        <end position="325"/>
    </location>
</feature>
<feature type="strand" evidence="8">
    <location>
        <begin position="327"/>
        <end position="330"/>
    </location>
</feature>
<feature type="strand" evidence="8">
    <location>
        <begin position="337"/>
        <end position="344"/>
    </location>
</feature>
<feature type="turn" evidence="8">
    <location>
        <begin position="345"/>
        <end position="347"/>
    </location>
</feature>
<feature type="strand" evidence="8">
    <location>
        <begin position="348"/>
        <end position="355"/>
    </location>
</feature>
<feature type="strand" evidence="8">
    <location>
        <begin position="358"/>
        <end position="365"/>
    </location>
</feature>
<feature type="turn" evidence="8">
    <location>
        <begin position="366"/>
        <end position="368"/>
    </location>
</feature>
<feature type="strand" evidence="8">
    <location>
        <begin position="371"/>
        <end position="375"/>
    </location>
</feature>
<feature type="strand" evidence="8">
    <location>
        <begin position="379"/>
        <end position="386"/>
    </location>
</feature>
<feature type="strand" evidence="8">
    <location>
        <begin position="392"/>
        <end position="399"/>
    </location>
</feature>
<feature type="strand" evidence="8">
    <location>
        <begin position="401"/>
        <end position="403"/>
    </location>
</feature>
<feature type="strand" evidence="8">
    <location>
        <begin position="406"/>
        <end position="411"/>
    </location>
</feature>
<feature type="strand" evidence="8">
    <location>
        <begin position="414"/>
        <end position="416"/>
    </location>
</feature>
<feature type="strand" evidence="8">
    <location>
        <begin position="420"/>
        <end position="423"/>
    </location>
</feature>
<feature type="helix" evidence="8">
    <location>
        <begin position="432"/>
        <end position="434"/>
    </location>
</feature>
<feature type="strand" evidence="8">
    <location>
        <begin position="435"/>
        <end position="443"/>
    </location>
</feature>
<feature type="strand" evidence="8">
    <location>
        <begin position="449"/>
        <end position="457"/>
    </location>
</feature>
<feature type="strand" evidence="8">
    <location>
        <begin position="468"/>
        <end position="471"/>
    </location>
</feature>
<feature type="helix" evidence="8">
    <location>
        <begin position="486"/>
        <end position="495"/>
    </location>
</feature>
<feature type="strand" evidence="8">
    <location>
        <begin position="498"/>
        <end position="502"/>
    </location>
</feature>
<feature type="helix" evidence="8">
    <location>
        <begin position="511"/>
        <end position="516"/>
    </location>
</feature>
<feature type="helix" evidence="8">
    <location>
        <begin position="520"/>
        <end position="523"/>
    </location>
</feature>
<feature type="helix" evidence="8">
    <location>
        <begin position="524"/>
        <end position="539"/>
    </location>
</feature>
<feature type="helix" evidence="8">
    <location>
        <begin position="545"/>
        <end position="547"/>
    </location>
</feature>
<feature type="strand" evidence="8">
    <location>
        <begin position="548"/>
        <end position="553"/>
    </location>
</feature>
<feature type="helix" evidence="8">
    <location>
        <begin position="555"/>
        <end position="566"/>
    </location>
</feature>
<feature type="helix" evidence="8">
    <location>
        <begin position="568"/>
        <end position="570"/>
    </location>
</feature>
<feature type="strand" evidence="8">
    <location>
        <begin position="572"/>
        <end position="578"/>
    </location>
</feature>
<feature type="turn" evidence="8">
    <location>
        <begin position="583"/>
        <end position="585"/>
    </location>
</feature>
<feature type="helix" evidence="8">
    <location>
        <begin position="586"/>
        <end position="588"/>
    </location>
</feature>
<feature type="helix" evidence="8">
    <location>
        <begin position="592"/>
        <end position="595"/>
    </location>
</feature>
<feature type="helix" evidence="8">
    <location>
        <begin position="596"/>
        <end position="599"/>
    </location>
</feature>
<feature type="helix" evidence="8">
    <location>
        <begin position="605"/>
        <end position="614"/>
    </location>
</feature>
<feature type="helix" evidence="8">
    <location>
        <begin position="616"/>
        <end position="618"/>
    </location>
</feature>
<feature type="strand" evidence="8">
    <location>
        <begin position="632"/>
        <end position="638"/>
    </location>
</feature>
<feature type="helix" evidence="8">
    <location>
        <begin position="647"/>
        <end position="659"/>
    </location>
</feature>
<feature type="turn" evidence="8">
    <location>
        <begin position="660"/>
        <end position="662"/>
    </location>
</feature>
<feature type="strand" evidence="8">
    <location>
        <begin position="670"/>
        <end position="677"/>
    </location>
</feature>
<feature type="helix" evidence="8">
    <location>
        <begin position="686"/>
        <end position="704"/>
    </location>
</feature>
<name>PPCE_HUMAN</name>
<protein>
    <recommendedName>
        <fullName>Prolyl endopeptidase</fullName>
        <shortName>PE</shortName>
        <ecNumber>3.4.21.26</ecNumber>
    </recommendedName>
    <alternativeName>
        <fullName>Post-proline cleaving enzyme</fullName>
    </alternativeName>
</protein>
<organism>
    <name type="scientific">Homo sapiens</name>
    <name type="common">Human</name>
    <dbReference type="NCBI Taxonomy" id="9606"/>
    <lineage>
        <taxon>Eukaryota</taxon>
        <taxon>Metazoa</taxon>
        <taxon>Chordata</taxon>
        <taxon>Craniata</taxon>
        <taxon>Vertebrata</taxon>
        <taxon>Euteleostomi</taxon>
        <taxon>Mammalia</taxon>
        <taxon>Eutheria</taxon>
        <taxon>Euarchontoglires</taxon>
        <taxon>Primates</taxon>
        <taxon>Haplorrhini</taxon>
        <taxon>Catarrhini</taxon>
        <taxon>Hominidae</taxon>
        <taxon>Homo</taxon>
    </lineage>
</organism>
<comment type="function">
    <text>Cleaves peptide bonds on the C-terminal side of prolyl residues within peptides that are up to approximately 30 amino acids long.</text>
</comment>
<comment type="catalytic activity">
    <reaction>
        <text>Hydrolysis of Pro-|-Xaa &gt;&gt; Ala-|-Xaa in oligopeptides.</text>
        <dbReference type="EC" id="3.4.21.26"/>
    </reaction>
</comment>
<comment type="subunit">
    <text evidence="2 3">Monomer.</text>
</comment>
<comment type="interaction">
    <interactant intactId="EBI-1049962">
        <id>P48147</id>
    </interactant>
    <interactant intactId="EBI-354056">
        <id>P04406</id>
        <label>GAPDH</label>
    </interactant>
    <organismsDiffer>false</organismsDiffer>
    <experiments>5</experiments>
</comment>
<comment type="subcellular location">
    <subcellularLocation>
        <location>Cytoplasm</location>
    </subcellularLocation>
</comment>
<comment type="PTM">
    <text>The N-terminus is blocked.</text>
</comment>
<comment type="similarity">
    <text evidence="5">Belongs to the peptidase S9A family.</text>
</comment>
<keyword id="KW-0002">3D-structure</keyword>
<keyword id="KW-0007">Acetylation</keyword>
<keyword id="KW-0963">Cytoplasm</keyword>
<keyword id="KW-0903">Direct protein sequencing</keyword>
<keyword id="KW-0378">Hydrolase</keyword>
<keyword id="KW-0645">Protease</keyword>
<keyword id="KW-1267">Proteomics identification</keyword>
<keyword id="KW-1185">Reference proteome</keyword>
<keyword id="KW-0720">Serine protease</keyword>
<reference key="1">
    <citation type="journal article" date="1994" name="Gene">
        <title>Cloning and sequence analysis of the gene encoding human lymphocyte prolyl endopeptidase.</title>
        <authorList>
            <person name="Vanhoof G."/>
            <person name="Goossens F."/>
            <person name="Hendriks L."/>
            <person name="De Meester I."/>
            <person name="Hendriks D."/>
            <person name="Vriend G."/>
            <person name="van Broeckhoven C."/>
            <person name="Scharpe S."/>
        </authorList>
    </citation>
    <scope>NUCLEOTIDE SEQUENCE [MRNA]</scope>
    <source>
        <tissue>Blood</tissue>
    </source>
</reference>
<reference key="2">
    <citation type="journal article" date="1994" name="J. Biochem.">
        <title>Molecular cloning and characterization of prolyl endopeptidase from human T cells.</title>
        <authorList>
            <person name="Shirasawa Y."/>
            <person name="Osawa T."/>
            <person name="Hirashima A."/>
        </authorList>
    </citation>
    <scope>NUCLEOTIDE SEQUENCE [MRNA]</scope>
    <scope>VARIANT ILE-706</scope>
</reference>
<reference key="3">
    <citation type="submission" date="2004-06" db="EMBL/GenBank/DDBJ databases">
        <title>cDNA cloning and recombinant expression of human brain prolyl oligopeptidase.</title>
        <authorList>
            <person name="Tarrago T."/>
            <person name="Giralt E."/>
        </authorList>
    </citation>
    <scope>NUCLEOTIDE SEQUENCE [MRNA]</scope>
</reference>
<reference key="4">
    <citation type="journal article" date="2003" name="Nature">
        <title>The DNA sequence and analysis of human chromosome 6.</title>
        <authorList>
            <person name="Mungall A.J."/>
            <person name="Palmer S.A."/>
            <person name="Sims S.K."/>
            <person name="Edwards C.A."/>
            <person name="Ashurst J.L."/>
            <person name="Wilming L."/>
            <person name="Jones M.C."/>
            <person name="Horton R."/>
            <person name="Hunt S.E."/>
            <person name="Scott C.E."/>
            <person name="Gilbert J.G.R."/>
            <person name="Clamp M.E."/>
            <person name="Bethel G."/>
            <person name="Milne S."/>
            <person name="Ainscough R."/>
            <person name="Almeida J.P."/>
            <person name="Ambrose K.D."/>
            <person name="Andrews T.D."/>
            <person name="Ashwell R.I.S."/>
            <person name="Babbage A.K."/>
            <person name="Bagguley C.L."/>
            <person name="Bailey J."/>
            <person name="Banerjee R."/>
            <person name="Barker D.J."/>
            <person name="Barlow K.F."/>
            <person name="Bates K."/>
            <person name="Beare D.M."/>
            <person name="Beasley H."/>
            <person name="Beasley O."/>
            <person name="Bird C.P."/>
            <person name="Blakey S.E."/>
            <person name="Bray-Allen S."/>
            <person name="Brook J."/>
            <person name="Brown A.J."/>
            <person name="Brown J.Y."/>
            <person name="Burford D.C."/>
            <person name="Burrill W."/>
            <person name="Burton J."/>
            <person name="Carder C."/>
            <person name="Carter N.P."/>
            <person name="Chapman J.C."/>
            <person name="Clark S.Y."/>
            <person name="Clark G."/>
            <person name="Clee C.M."/>
            <person name="Clegg S."/>
            <person name="Cobley V."/>
            <person name="Collier R.E."/>
            <person name="Collins J.E."/>
            <person name="Colman L.K."/>
            <person name="Corby N.R."/>
            <person name="Coville G.J."/>
            <person name="Culley K.M."/>
            <person name="Dhami P."/>
            <person name="Davies J."/>
            <person name="Dunn M."/>
            <person name="Earthrowl M.E."/>
            <person name="Ellington A.E."/>
            <person name="Evans K.A."/>
            <person name="Faulkner L."/>
            <person name="Francis M.D."/>
            <person name="Frankish A."/>
            <person name="Frankland J."/>
            <person name="French L."/>
            <person name="Garner P."/>
            <person name="Garnett J."/>
            <person name="Ghori M.J."/>
            <person name="Gilby L.M."/>
            <person name="Gillson C.J."/>
            <person name="Glithero R.J."/>
            <person name="Grafham D.V."/>
            <person name="Grant M."/>
            <person name="Gribble S."/>
            <person name="Griffiths C."/>
            <person name="Griffiths M.N.D."/>
            <person name="Hall R."/>
            <person name="Halls K.S."/>
            <person name="Hammond S."/>
            <person name="Harley J.L."/>
            <person name="Hart E.A."/>
            <person name="Heath P.D."/>
            <person name="Heathcott R."/>
            <person name="Holmes S.J."/>
            <person name="Howden P.J."/>
            <person name="Howe K.L."/>
            <person name="Howell G.R."/>
            <person name="Huckle E."/>
            <person name="Humphray S.J."/>
            <person name="Humphries M.D."/>
            <person name="Hunt A.R."/>
            <person name="Johnson C.M."/>
            <person name="Joy A.A."/>
            <person name="Kay M."/>
            <person name="Keenan S.J."/>
            <person name="Kimberley A.M."/>
            <person name="King A."/>
            <person name="Laird G.K."/>
            <person name="Langford C."/>
            <person name="Lawlor S."/>
            <person name="Leongamornlert D.A."/>
            <person name="Leversha M."/>
            <person name="Lloyd C.R."/>
            <person name="Lloyd D.M."/>
            <person name="Loveland J.E."/>
            <person name="Lovell J."/>
            <person name="Martin S."/>
            <person name="Mashreghi-Mohammadi M."/>
            <person name="Maslen G.L."/>
            <person name="Matthews L."/>
            <person name="McCann O.T."/>
            <person name="McLaren S.J."/>
            <person name="McLay K."/>
            <person name="McMurray A."/>
            <person name="Moore M.J.F."/>
            <person name="Mullikin J.C."/>
            <person name="Niblett D."/>
            <person name="Nickerson T."/>
            <person name="Novik K.L."/>
            <person name="Oliver K."/>
            <person name="Overton-Larty E.K."/>
            <person name="Parker A."/>
            <person name="Patel R."/>
            <person name="Pearce A.V."/>
            <person name="Peck A.I."/>
            <person name="Phillimore B.J.C.T."/>
            <person name="Phillips S."/>
            <person name="Plumb R.W."/>
            <person name="Porter K.M."/>
            <person name="Ramsey Y."/>
            <person name="Ranby S.A."/>
            <person name="Rice C.M."/>
            <person name="Ross M.T."/>
            <person name="Searle S.M."/>
            <person name="Sehra H.K."/>
            <person name="Sheridan E."/>
            <person name="Skuce C.D."/>
            <person name="Smith S."/>
            <person name="Smith M."/>
            <person name="Spraggon L."/>
            <person name="Squares S.L."/>
            <person name="Steward C.A."/>
            <person name="Sycamore N."/>
            <person name="Tamlyn-Hall G."/>
            <person name="Tester J."/>
            <person name="Theaker A.J."/>
            <person name="Thomas D.W."/>
            <person name="Thorpe A."/>
            <person name="Tracey A."/>
            <person name="Tromans A."/>
            <person name="Tubby B."/>
            <person name="Wall M."/>
            <person name="Wallis J.M."/>
            <person name="West A.P."/>
            <person name="White S.S."/>
            <person name="Whitehead S.L."/>
            <person name="Whittaker H."/>
            <person name="Wild A."/>
            <person name="Willey D.J."/>
            <person name="Wilmer T.E."/>
            <person name="Wood J.M."/>
            <person name="Wray P.W."/>
            <person name="Wyatt J.C."/>
            <person name="Young L."/>
            <person name="Younger R.M."/>
            <person name="Bentley D.R."/>
            <person name="Coulson A."/>
            <person name="Durbin R.M."/>
            <person name="Hubbard T."/>
            <person name="Sulston J.E."/>
            <person name="Dunham I."/>
            <person name="Rogers J."/>
            <person name="Beck S."/>
        </authorList>
    </citation>
    <scope>NUCLEOTIDE SEQUENCE [LARGE SCALE GENOMIC DNA]</scope>
</reference>
<reference key="5">
    <citation type="submission" date="2005-09" db="EMBL/GenBank/DDBJ databases">
        <authorList>
            <person name="Mural R.J."/>
            <person name="Istrail S."/>
            <person name="Sutton G.G."/>
            <person name="Florea L."/>
            <person name="Halpern A.L."/>
            <person name="Mobarry C.M."/>
            <person name="Lippert R."/>
            <person name="Walenz B."/>
            <person name="Shatkay H."/>
            <person name="Dew I."/>
            <person name="Miller J.R."/>
            <person name="Flanigan M.J."/>
            <person name="Edwards N.J."/>
            <person name="Bolanos R."/>
            <person name="Fasulo D."/>
            <person name="Halldorsson B.V."/>
            <person name="Hannenhalli S."/>
            <person name="Turner R."/>
            <person name="Yooseph S."/>
            <person name="Lu F."/>
            <person name="Nusskern D.R."/>
            <person name="Shue B.C."/>
            <person name="Zheng X.H."/>
            <person name="Zhong F."/>
            <person name="Delcher A.L."/>
            <person name="Huson D.H."/>
            <person name="Kravitz S.A."/>
            <person name="Mouchard L."/>
            <person name="Reinert K."/>
            <person name="Remington K.A."/>
            <person name="Clark A.G."/>
            <person name="Waterman M.S."/>
            <person name="Eichler E.E."/>
            <person name="Adams M.D."/>
            <person name="Hunkapiller M.W."/>
            <person name="Myers E.W."/>
            <person name="Venter J.C."/>
        </authorList>
    </citation>
    <scope>NUCLEOTIDE SEQUENCE [LARGE SCALE GENOMIC DNA]</scope>
</reference>
<reference key="6">
    <citation type="journal article" date="2004" name="Genome Res.">
        <title>The status, quality, and expansion of the NIH full-length cDNA project: the Mammalian Gene Collection (MGC).</title>
        <authorList>
            <consortium name="The MGC Project Team"/>
        </authorList>
    </citation>
    <scope>NUCLEOTIDE SEQUENCE [LARGE SCALE MRNA]</scope>
    <source>
        <tissue>Skin</tissue>
    </source>
</reference>
<reference key="7">
    <citation type="journal article" date="1995" name="Eur. J. Biochem.">
        <title>The purification, characterization and analysis of primary and secondary-structure of prolyl oligopeptidase from human lymphocytes. Evidence that the enzyme belongs to the alpha/beta hydrolase fold family.</title>
        <authorList>
            <person name="Goossens F."/>
            <person name="De Meester I."/>
            <person name="Vanhoof G."/>
            <person name="Hendriks D."/>
            <person name="Vriend G."/>
            <person name="Scharpe S."/>
        </authorList>
    </citation>
    <scope>PROTEIN SEQUENCE OF 136-149</scope>
    <scope>SUBUNIT</scope>
    <scope>CHARACTERIZATION</scope>
    <source>
        <tissue>Lymphocyte</tissue>
    </source>
</reference>
<reference key="8">
    <citation type="journal article" date="2009" name="Science">
        <title>Lysine acetylation targets protein complexes and co-regulates major cellular functions.</title>
        <authorList>
            <person name="Choudhary C."/>
            <person name="Kumar C."/>
            <person name="Gnad F."/>
            <person name="Nielsen M.L."/>
            <person name="Rehman M."/>
            <person name="Walther T.C."/>
            <person name="Olsen J.V."/>
            <person name="Mann M."/>
        </authorList>
    </citation>
    <scope>ACETYLATION [LARGE SCALE ANALYSIS] AT LYS-157</scope>
    <scope>IDENTIFICATION BY MASS SPECTROMETRY [LARGE SCALE ANALYSIS]</scope>
</reference>
<reference key="9">
    <citation type="journal article" date="2011" name="BMC Syst. Biol.">
        <title>Initial characterization of the human central proteome.</title>
        <authorList>
            <person name="Burkard T.R."/>
            <person name="Planyavsky M."/>
            <person name="Kaupe I."/>
            <person name="Breitwieser F.P."/>
            <person name="Buerckstuemmer T."/>
            <person name="Bennett K.L."/>
            <person name="Superti-Furga G."/>
            <person name="Colinge J."/>
        </authorList>
    </citation>
    <scope>IDENTIFICATION BY MASS SPECTROMETRY [LARGE SCALE ANALYSIS]</scope>
</reference>
<reference key="10">
    <citation type="journal article" date="2012" name="Proc. Natl. Acad. Sci. U.S.A.">
        <title>N-terminal acetylome analyses and functional insights of the N-terminal acetyltransferase NatB.</title>
        <authorList>
            <person name="Van Damme P."/>
            <person name="Lasa M."/>
            <person name="Polevoda B."/>
            <person name="Gazquez C."/>
            <person name="Elosegui-Artola A."/>
            <person name="Kim D.S."/>
            <person name="De Juan-Pardo E."/>
            <person name="Demeyer K."/>
            <person name="Hole K."/>
            <person name="Larrea E."/>
            <person name="Timmerman E."/>
            <person name="Prieto J."/>
            <person name="Arnesen T."/>
            <person name="Sherman F."/>
            <person name="Gevaert K."/>
            <person name="Aldabe R."/>
        </authorList>
    </citation>
    <scope>ACETYLATION [LARGE SCALE ANALYSIS] AT MET-1</scope>
    <scope>IDENTIFICATION BY MASS SPECTROMETRY [LARGE SCALE ANALYSIS]</scope>
</reference>
<reference key="11">
    <citation type="journal article" date="2008" name="Bioorg. Med. Chem. Lett.">
        <title>Pyrrolidinyl pyridone and pyrazinone analogues as potent inhibitors of prolyl oligopeptidase (POP).</title>
        <authorList>
            <person name="Haffner C.D."/>
            <person name="Diaz C.J."/>
            <person name="Miller A.B."/>
            <person name="Reid R.A."/>
            <person name="Madauss K.P."/>
            <person name="Hassell A."/>
            <person name="Hanlon M.H."/>
            <person name="Porter D.J."/>
            <person name="Becherer J.D."/>
            <person name="Carter L.H."/>
        </authorList>
    </citation>
    <scope>X-RAY CRYSTALLOGRAPHY (1.56 ANGSTROMS) OF 2-710 IN COMPLEX WITH INHIBITOR</scope>
</reference>
<accession>P48147</accession>
<accession>Q8N6D4</accession>
<dbReference type="EC" id="3.4.21.26"/>
<dbReference type="EMBL" id="X74496">
    <property type="protein sequence ID" value="CAA52605.1"/>
    <property type="molecule type" value="mRNA"/>
</dbReference>
<dbReference type="EMBL" id="D21102">
    <property type="protein sequence ID" value="BAA04661.1"/>
    <property type="molecule type" value="mRNA"/>
</dbReference>
<dbReference type="EMBL" id="AY660966">
    <property type="protein sequence ID" value="AAV70495.1"/>
    <property type="molecule type" value="mRNA"/>
</dbReference>
<dbReference type="EMBL" id="AL590871">
    <property type="status" value="NOT_ANNOTATED_CDS"/>
    <property type="molecule type" value="Genomic_DNA"/>
</dbReference>
<dbReference type="EMBL" id="AL139191">
    <property type="status" value="NOT_ANNOTATED_CDS"/>
    <property type="molecule type" value="Genomic_DNA"/>
</dbReference>
<dbReference type="EMBL" id="AL133406">
    <property type="status" value="NOT_ANNOTATED_CDS"/>
    <property type="molecule type" value="Genomic_DNA"/>
</dbReference>
<dbReference type="EMBL" id="CH471051">
    <property type="protein sequence ID" value="EAW48426.1"/>
    <property type="molecule type" value="Genomic_DNA"/>
</dbReference>
<dbReference type="EMBL" id="BC030636">
    <property type="protein sequence ID" value="AAH30636.1"/>
    <property type="molecule type" value="mRNA"/>
</dbReference>
<dbReference type="CCDS" id="CCDS5053.1"/>
<dbReference type="PIR" id="I38134">
    <property type="entry name" value="I38134"/>
</dbReference>
<dbReference type="PIR" id="JC2257">
    <property type="entry name" value="JC2257"/>
</dbReference>
<dbReference type="RefSeq" id="NP_002717.3">
    <property type="nucleotide sequence ID" value="NM_002726.4"/>
</dbReference>
<dbReference type="PDB" id="3DDU">
    <property type="method" value="X-ray"/>
    <property type="resolution" value="1.56 A"/>
    <property type="chains" value="A=2-710"/>
</dbReference>
<dbReference type="PDBsum" id="3DDU"/>
<dbReference type="SMR" id="P48147"/>
<dbReference type="BioGRID" id="111541">
    <property type="interactions" value="86"/>
</dbReference>
<dbReference type="FunCoup" id="P48147">
    <property type="interactions" value="1347"/>
</dbReference>
<dbReference type="IntAct" id="P48147">
    <property type="interactions" value="18"/>
</dbReference>
<dbReference type="STRING" id="9606.ENSP00000499089"/>
<dbReference type="BindingDB" id="P48147"/>
<dbReference type="ChEMBL" id="CHEMBL3202"/>
<dbReference type="DrugBank" id="DB07148">
    <property type="generic name" value="(6S)-1-chloro-3-[(4-fluorobenzyl)oxy]-6-(pyrrolidin-1-ylcarbonyl)pyrrolo[1,2-a]pyrazin-4(6H)-one"/>
</dbReference>
<dbReference type="DrugBank" id="DB01684">
    <property type="generic name" value="1-Hydroxy-1-Thio-Glycerol"/>
</dbReference>
<dbReference type="DrugBank" id="DB08738">
    <property type="generic name" value="1-{3-oxo-3-[(2S)-2-(pyrrolidin-1-ylcarbonyl)pyrrolidin-1-yl]propyl}-3-phenylquinoxalin-2(1H)-one"/>
</dbReference>
<dbReference type="DrugBank" id="DB08739">
    <property type="generic name" value="2-{3-[(2S)-4,4-difluoro-2-(pyrrolidin-1-ylcarbonyl)pyrrolidin-1-yl]-3-oxopropyl}-isoindole-1,3(2H)-dione"/>
</dbReference>
<dbReference type="DrugBank" id="DB16101">
    <property type="generic name" value="Baicalein"/>
</dbReference>
<dbReference type="DrugBank" id="DB03864">
    <property type="generic name" value="Monothioglycerol"/>
</dbReference>
<dbReference type="DrugBank" id="DB00107">
    <property type="generic name" value="Oxytocin"/>
</dbReference>
<dbReference type="DrugBank" id="DB03382">
    <property type="generic name" value="S-oxy-L-cysteine"/>
</dbReference>
<dbReference type="DrugBank" id="DB03535">
    <property type="generic name" value="Z-Pro-Prolinal"/>
</dbReference>
<dbReference type="DrugCentral" id="P48147"/>
<dbReference type="GuidetoPHARMACOLOGY" id="2395"/>
<dbReference type="ESTHER" id="human-PREP">
    <property type="family name" value="S9N_PPCE_Peptidase_S9"/>
</dbReference>
<dbReference type="MEROPS" id="S09.001"/>
<dbReference type="GlyGen" id="P48147">
    <property type="glycosylation" value="1 site, 1 O-linked glycan (1 site)"/>
</dbReference>
<dbReference type="iPTMnet" id="P48147"/>
<dbReference type="MetOSite" id="P48147"/>
<dbReference type="PhosphoSitePlus" id="P48147"/>
<dbReference type="SwissPalm" id="P48147"/>
<dbReference type="BioMuta" id="PREP"/>
<dbReference type="DMDM" id="215273868"/>
<dbReference type="jPOST" id="P48147"/>
<dbReference type="MassIVE" id="P48147"/>
<dbReference type="PaxDb" id="9606-ENSP00000358106"/>
<dbReference type="PeptideAtlas" id="P48147"/>
<dbReference type="PRIDE" id="P48147"/>
<dbReference type="ProteomicsDB" id="55866"/>
<dbReference type="Pumba" id="P48147"/>
<dbReference type="Antibodypedia" id="32113">
    <property type="antibodies" value="213 antibodies from 32 providers"/>
</dbReference>
<dbReference type="DNASU" id="5550"/>
<dbReference type="Ensembl" id="ENST00000652536.2">
    <property type="protein sequence ID" value="ENSP00000499089.1"/>
    <property type="gene ID" value="ENSG00000085377.15"/>
</dbReference>
<dbReference type="GeneID" id="5550"/>
<dbReference type="KEGG" id="hsa:5550"/>
<dbReference type="MANE-Select" id="ENST00000652536.2">
    <property type="protein sequence ID" value="ENSP00000499089.1"/>
    <property type="RefSeq nucleotide sequence ID" value="NM_002726.5"/>
    <property type="RefSeq protein sequence ID" value="NP_002717.3"/>
</dbReference>
<dbReference type="UCSC" id="uc003prc.4">
    <property type="organism name" value="human"/>
</dbReference>
<dbReference type="AGR" id="HGNC:9358"/>
<dbReference type="CTD" id="5550"/>
<dbReference type="DisGeNET" id="5550"/>
<dbReference type="GeneCards" id="PREP"/>
<dbReference type="HGNC" id="HGNC:9358">
    <property type="gene designation" value="PREP"/>
</dbReference>
<dbReference type="HPA" id="ENSG00000085377">
    <property type="expression patterns" value="Tissue enhanced (skeletal)"/>
</dbReference>
<dbReference type="MIM" id="600400">
    <property type="type" value="gene"/>
</dbReference>
<dbReference type="neXtProt" id="NX_P48147"/>
<dbReference type="OpenTargets" id="ENSG00000085377"/>
<dbReference type="PharmGKB" id="PA33730"/>
<dbReference type="VEuPathDB" id="HostDB:ENSG00000085377"/>
<dbReference type="eggNOG" id="KOG2237">
    <property type="taxonomic scope" value="Eukaryota"/>
</dbReference>
<dbReference type="GeneTree" id="ENSGT00530000063426"/>
<dbReference type="HOGENOM" id="CLU_011290_1_1_1"/>
<dbReference type="InParanoid" id="P48147"/>
<dbReference type="OMA" id="LDPWFSH"/>
<dbReference type="OrthoDB" id="248387at2759"/>
<dbReference type="PAN-GO" id="P48147">
    <property type="GO annotations" value="2 GO annotations based on evolutionary models"/>
</dbReference>
<dbReference type="PhylomeDB" id="P48147"/>
<dbReference type="TreeFam" id="TF300655"/>
<dbReference type="BRENDA" id="3.4.21.26">
    <property type="organism ID" value="2681"/>
</dbReference>
<dbReference type="PathwayCommons" id="P48147"/>
<dbReference type="SignaLink" id="P48147"/>
<dbReference type="BioGRID-ORCS" id="5550">
    <property type="hits" value="13 hits in 1165 CRISPR screens"/>
</dbReference>
<dbReference type="ChiTaRS" id="PREP">
    <property type="organism name" value="human"/>
</dbReference>
<dbReference type="EvolutionaryTrace" id="P48147"/>
<dbReference type="GeneWiki" id="Prolyl_endopeptidase"/>
<dbReference type="GenomeRNAi" id="5550"/>
<dbReference type="Pharos" id="P48147">
    <property type="development level" value="Tchem"/>
</dbReference>
<dbReference type="PRO" id="PR:P48147"/>
<dbReference type="Proteomes" id="UP000005640">
    <property type="component" value="Chromosome 6"/>
</dbReference>
<dbReference type="RNAct" id="P48147">
    <property type="molecule type" value="protein"/>
</dbReference>
<dbReference type="Bgee" id="ENSG00000085377">
    <property type="expression patterns" value="Expressed in secondary oocyte and 184 other cell types or tissues"/>
</dbReference>
<dbReference type="ExpressionAtlas" id="P48147">
    <property type="expression patterns" value="baseline and differential"/>
</dbReference>
<dbReference type="GO" id="GO:0005737">
    <property type="term" value="C:cytoplasm"/>
    <property type="evidence" value="ECO:0000304"/>
    <property type="project" value="ProtInc"/>
</dbReference>
<dbReference type="GO" id="GO:0005829">
    <property type="term" value="C:cytosol"/>
    <property type="evidence" value="ECO:0000314"/>
    <property type="project" value="HPA"/>
</dbReference>
<dbReference type="GO" id="GO:0005576">
    <property type="term" value="C:extracellular region"/>
    <property type="evidence" value="ECO:0007669"/>
    <property type="project" value="Ensembl"/>
</dbReference>
<dbReference type="GO" id="GO:0016020">
    <property type="term" value="C:membrane"/>
    <property type="evidence" value="ECO:0007005"/>
    <property type="project" value="UniProtKB"/>
</dbReference>
<dbReference type="GO" id="GO:0005634">
    <property type="term" value="C:nucleus"/>
    <property type="evidence" value="ECO:0007669"/>
    <property type="project" value="Ensembl"/>
</dbReference>
<dbReference type="GO" id="GO:0004181">
    <property type="term" value="F:metallocarboxypeptidase activity"/>
    <property type="evidence" value="ECO:0007669"/>
    <property type="project" value="Ensembl"/>
</dbReference>
<dbReference type="GO" id="GO:0070012">
    <property type="term" value="F:oligopeptidase activity"/>
    <property type="evidence" value="ECO:0000318"/>
    <property type="project" value="GO_Central"/>
</dbReference>
<dbReference type="GO" id="GO:0004252">
    <property type="term" value="F:serine-type endopeptidase activity"/>
    <property type="evidence" value="ECO:0000304"/>
    <property type="project" value="ProtInc"/>
</dbReference>
<dbReference type="GO" id="GO:0008236">
    <property type="term" value="F:serine-type peptidase activity"/>
    <property type="evidence" value="ECO:0000304"/>
    <property type="project" value="ProtInc"/>
</dbReference>
<dbReference type="GO" id="GO:0002003">
    <property type="term" value="P:angiotensin maturation"/>
    <property type="evidence" value="ECO:0007669"/>
    <property type="project" value="Ensembl"/>
</dbReference>
<dbReference type="GO" id="GO:0006508">
    <property type="term" value="P:proteolysis"/>
    <property type="evidence" value="ECO:0000304"/>
    <property type="project" value="ProtInc"/>
</dbReference>
<dbReference type="FunFam" id="2.130.10.120:FF:000001">
    <property type="entry name" value="Prolyl endopeptidase"/>
    <property type="match status" value="1"/>
</dbReference>
<dbReference type="FunFam" id="3.40.50.1820:FF:000005">
    <property type="entry name" value="Prolyl endopeptidase"/>
    <property type="match status" value="1"/>
</dbReference>
<dbReference type="FunFam" id="3.40.50.1820:FF:000275">
    <property type="entry name" value="Prolyl endopeptidase"/>
    <property type="match status" value="1"/>
</dbReference>
<dbReference type="Gene3D" id="3.40.50.1820">
    <property type="entry name" value="alpha/beta hydrolase"/>
    <property type="match status" value="1"/>
</dbReference>
<dbReference type="Gene3D" id="2.130.10.120">
    <property type="entry name" value="Prolyl oligopeptidase, N-terminal domain"/>
    <property type="match status" value="1"/>
</dbReference>
<dbReference type="InterPro" id="IPR029058">
    <property type="entry name" value="AB_hydrolase_fold"/>
</dbReference>
<dbReference type="InterPro" id="IPR002471">
    <property type="entry name" value="Pept_S9_AS"/>
</dbReference>
<dbReference type="InterPro" id="IPR023302">
    <property type="entry name" value="Pept_S9A_N"/>
</dbReference>
<dbReference type="InterPro" id="IPR001375">
    <property type="entry name" value="Peptidase_S9_cat"/>
</dbReference>
<dbReference type="InterPro" id="IPR002470">
    <property type="entry name" value="Peptidase_S9A"/>
</dbReference>
<dbReference type="InterPro" id="IPR051167">
    <property type="entry name" value="Prolyl_oligopep/macrocyclase"/>
</dbReference>
<dbReference type="PANTHER" id="PTHR42881">
    <property type="entry name" value="PROLYL ENDOPEPTIDASE"/>
    <property type="match status" value="1"/>
</dbReference>
<dbReference type="PANTHER" id="PTHR42881:SF2">
    <property type="entry name" value="PROLYL ENDOPEPTIDASE"/>
    <property type="match status" value="1"/>
</dbReference>
<dbReference type="Pfam" id="PF00326">
    <property type="entry name" value="Peptidase_S9"/>
    <property type="match status" value="1"/>
</dbReference>
<dbReference type="Pfam" id="PF02897">
    <property type="entry name" value="Peptidase_S9_N"/>
    <property type="match status" value="1"/>
</dbReference>
<dbReference type="PRINTS" id="PR00862">
    <property type="entry name" value="PROLIGOPTASE"/>
</dbReference>
<dbReference type="SUPFAM" id="SSF53474">
    <property type="entry name" value="alpha/beta-Hydrolases"/>
    <property type="match status" value="1"/>
</dbReference>
<dbReference type="SUPFAM" id="SSF50993">
    <property type="entry name" value="Peptidase/esterase 'gauge' domain"/>
    <property type="match status" value="1"/>
</dbReference>
<dbReference type="PROSITE" id="PS00708">
    <property type="entry name" value="PRO_ENDOPEP_SER"/>
    <property type="match status" value="1"/>
</dbReference>
<evidence type="ECO:0000255" key="1">
    <source>
        <dbReference type="PROSITE-ProRule" id="PRU10084"/>
    </source>
</evidence>
<evidence type="ECO:0000269" key="2">
    <source>
    </source>
</evidence>
<evidence type="ECO:0000269" key="3">
    <source>
    </source>
</evidence>
<evidence type="ECO:0000269" key="4">
    <source>
    </source>
</evidence>
<evidence type="ECO:0000305" key="5"/>
<evidence type="ECO:0007744" key="6">
    <source>
    </source>
</evidence>
<evidence type="ECO:0007744" key="7">
    <source>
    </source>
</evidence>
<evidence type="ECO:0007829" key="8">
    <source>
        <dbReference type="PDB" id="3DDU"/>
    </source>
</evidence>
<proteinExistence type="evidence at protein level"/>
<sequence>MLSLQYPDVYRDETAVQDYHGHKICDPYAWLEDPDSEQTKAFVEAQNKITVPFLEQCPIRGLYKERMTELYDYPKYSCHFKKGKRYFYFYNTGLQNQRVLYVQDSLEGEARVFLDPNILSDDGTVALRGYAFSEDGEYFAYGLSASGSDWVTIKFMKVDGAKELPDVLERVKFSCMAWTHDGKGMFYNSYPQQDGKSDGTETSTNLHQKLYYHVLGTDQSEDILCAEFPDEPKWMGGAELSDDGRYVLLSIREGCDPVNRLWYCDLQQESSGIAGILKWVKLIDNFEGEYDYVTNEGTVFTFKTNRQSPNYRVINIDFRDPEESKWKVLVPEHEKDVLEWIACVRSNFLVLCYLHDVKNILQLHDLTTGALLKTFPLDVGSIVGYSGQKKDTEIFYQFTSFLSPGIIYHCDLTKEELEPRVFREVTVKGIDASDYQTVQIFYPSKDGTKIPMFIVHKKGIKLDGSHPAFLYGYGGFNISITPNYSVSRLIFVRHMGGILAVANIRGGGEYGETWHKGGILANKQNCFDDFQCAAEYLIKEGYTSPKRLTINGGSNGGLLVAACANQRPDLFGCVIAQVGVMDMLKFHKYTIGHAWTTDYGCSDSKQHFEWLVKYSPLHNVKLPEADDIQYPSMLLLTADHDDRVVPLHSLKFIATLQYIVGRSRKQSNPLLIHVDTKAGHGAGKPTAKVIEEVSDMFAFIARCLNVDWIP</sequence>
<gene>
    <name type="primary">PREP</name>
    <name type="synonym">PEP</name>
</gene>